<organism>
    <name type="scientific">Ricinus communis</name>
    <name type="common">Castor bean</name>
    <dbReference type="NCBI Taxonomy" id="3988"/>
    <lineage>
        <taxon>Eukaryota</taxon>
        <taxon>Viridiplantae</taxon>
        <taxon>Streptophyta</taxon>
        <taxon>Embryophyta</taxon>
        <taxon>Tracheophyta</taxon>
        <taxon>Spermatophyta</taxon>
        <taxon>Magnoliopsida</taxon>
        <taxon>eudicotyledons</taxon>
        <taxon>Gunneridae</taxon>
        <taxon>Pentapetalae</taxon>
        <taxon>rosids</taxon>
        <taxon>fabids</taxon>
        <taxon>Malpighiales</taxon>
        <taxon>Euphorbiaceae</taxon>
        <taxon>Acalyphoideae</taxon>
        <taxon>Acalypheae</taxon>
        <taxon>Ricinus</taxon>
    </lineage>
</organism>
<gene>
    <name evidence="5" type="primary">KSL2</name>
    <name evidence="7" type="ORF">RCOM_0823630</name>
</gene>
<reference key="1">
    <citation type="journal article" date="2010" name="Nat. Biotechnol.">
        <title>Draft genome sequence of the oilseed species Ricinus communis.</title>
        <authorList>
            <person name="Chan A.P."/>
            <person name="Crabtree J."/>
            <person name="Zhao Q."/>
            <person name="Lorenzi H."/>
            <person name="Orvis J."/>
            <person name="Puiu D."/>
            <person name="Melake-Berhan A."/>
            <person name="Jones K.M."/>
            <person name="Redman J."/>
            <person name="Chen G."/>
            <person name="Cahoon E.B."/>
            <person name="Gedil M."/>
            <person name="Stanke M."/>
            <person name="Haas B.J."/>
            <person name="Wortman J.R."/>
            <person name="Fraser-Liggett C.M."/>
            <person name="Ravel J."/>
            <person name="Rabinowicz P.D."/>
        </authorList>
    </citation>
    <scope>NUCLEOTIDE SEQUENCE [LARGE SCALE GENOMIC DNA]</scope>
    <source>
        <strain>cv. Hale</strain>
    </source>
</reference>
<reference key="2">
    <citation type="journal article" date="2014" name="Phytochemistry">
        <title>Biochemical characterization of the castor bean ent-kaurene synthase(-like) family supports quantum chemical view of diterpene cyclization.</title>
        <authorList>
            <person name="Jackson A.J."/>
            <person name="Hershey D.M."/>
            <person name="Chesnut T."/>
            <person name="Xu M."/>
            <person name="Peters R.J."/>
        </authorList>
    </citation>
    <scope>FUNCTION</scope>
    <scope>MUTAGENESIS OF ALA-676</scope>
    <scope>CATALYTIC ACTIVITY</scope>
    <scope>PATHWAY</scope>
    <scope>GENE FAMILY</scope>
    <scope>NOMENCLATURE</scope>
</reference>
<proteinExistence type="evidence at protein level"/>
<sequence>MLLTCTNSLKISSQAKEWESKTLTGMSLEQLNKRIRIPASDIEGTMTSRVKEMLSKVELSVSSYDTAWVAMVPTLDSSKQPLFPKSLKWIMENQQPDGSWGLDLSHPLLIKDSLSSTLACVLALQKWNVGQQLVHKGLDFVQSNIWAATDEHQRSPIGFDMIFPSMIEYGRDMGLNLSLNQSLVEAMLLKRDLETKRLFYYLKDKPSNLAYVAEGLNTLNDWKEVMKFQRSNGSLFNSPSSTAAALIHLHDGKCFEYLNSLTKKFGNAVPTIYPFDIYARLFVIDSLEKLGIDRYVREDKEKMLDDIYRCWMQGSEEIFSDPTCCAMAFRILRTNGYAISSDALANFDEKESLFYEKDAKSTLELFKASQTTIFQDEPVLDKINAWTSTYLEKELRDGTIPDKSLHAEVDYALKHIQANLVRLEHRSYIENYNVDNVSLLKASYRFCNVDNRDLLTFSFQDYNMCQSMHRKELDYLEGWIKKCGIDQLEYARQTIKYAAFSIASSIFQPKFSDGRISWAQNSVLTTIVDDFFDYGGSMEELVNLIELVQRWDDHTTIGYKSKEVEILFNAVYSTTNDLADKARILQGRCVKKHMIDSWIFLLKAMLKEAEWARNKIVPTMDDFIPNGYISFALGPIILTSLYLVEPLSEEAVNSEEYEKLYMVISILGRLINDRVATQSDGAQGKLNIVTLEVINGKGAITEEEVQEKVARTIDSNRRELLRMVSQTEGSIVPKACKDFFWTMSNVLHLFYMGDDGYSSPTKMMSAVNAVINEPIVLP</sequence>
<name>KSL2_RICCO</name>
<evidence type="ECO:0000250" key="1">
    <source>
        <dbReference type="UniProtKB" id="Q40577"/>
    </source>
</evidence>
<evidence type="ECO:0000255" key="2"/>
<evidence type="ECO:0000269" key="3">
    <source>
    </source>
</evidence>
<evidence type="ECO:0000269" key="4">
    <source>
    </source>
</evidence>
<evidence type="ECO:0000303" key="5">
    <source>
    </source>
</evidence>
<evidence type="ECO:0000305" key="6"/>
<evidence type="ECO:0000312" key="7">
    <source>
        <dbReference type="EMBL" id="EEF36535.1"/>
    </source>
</evidence>
<protein>
    <recommendedName>
        <fullName evidence="5">Ent-trachylobane synthase KSL2, chloroplastic</fullName>
        <ecNumber evidence="3">4.2.3.-</ecNumber>
    </recommendedName>
    <alternativeName>
        <fullName evidence="5">Ent-kaurene synthase-like 2</fullName>
        <shortName evidence="5">RcKSL2</shortName>
        <ecNumber evidence="3">4.2.3.19</ecNumber>
    </alternativeName>
</protein>
<accession>B9SIM2</accession>
<keyword id="KW-0150">Chloroplast</keyword>
<keyword id="KW-0456">Lyase</keyword>
<keyword id="KW-0460">Magnesium</keyword>
<keyword id="KW-0479">Metal-binding</keyword>
<keyword id="KW-0934">Plastid</keyword>
<keyword id="KW-1185">Reference proteome</keyword>
<keyword id="KW-0809">Transit peptide</keyword>
<feature type="transit peptide" description="Chloroplast" evidence="2">
    <location>
        <begin position="1"/>
        <end position="37"/>
    </location>
</feature>
<feature type="chain" id="PRO_0000460911" description="Ent-trachylobane synthase KSL2, chloroplastic">
    <location>
        <begin position="38"/>
        <end position="778"/>
    </location>
</feature>
<feature type="short sequence motif" description="DDXXD motif" evidence="1">
    <location>
        <begin position="529"/>
        <end position="533"/>
    </location>
</feature>
<feature type="binding site" evidence="1">
    <location>
        <position position="529"/>
    </location>
    <ligand>
        <name>Mg(2+)</name>
        <dbReference type="ChEBI" id="CHEBI:18420"/>
        <label>1</label>
    </ligand>
</feature>
<feature type="binding site" evidence="1">
    <location>
        <position position="529"/>
    </location>
    <ligand>
        <name>Mg(2+)</name>
        <dbReference type="ChEBI" id="CHEBI:18420"/>
        <label>2</label>
    </ligand>
</feature>
<feature type="binding site" evidence="1">
    <location>
        <position position="533"/>
    </location>
    <ligand>
        <name>Mg(2+)</name>
        <dbReference type="ChEBI" id="CHEBI:18420"/>
        <label>1</label>
    </ligand>
</feature>
<feature type="binding site" evidence="1">
    <location>
        <position position="533"/>
    </location>
    <ligand>
        <name>Mg(2+)</name>
        <dbReference type="ChEBI" id="CHEBI:18420"/>
        <label>2</label>
    </ligand>
</feature>
<feature type="binding site" evidence="1">
    <location>
        <position position="672"/>
    </location>
    <ligand>
        <name>Mg(2+)</name>
        <dbReference type="ChEBI" id="CHEBI:18420"/>
        <label>3</label>
    </ligand>
</feature>
<feature type="binding site" evidence="1">
    <location>
        <position position="673"/>
    </location>
    <ligand>
        <name>Mg(2+)</name>
        <dbReference type="ChEBI" id="CHEBI:18420"/>
        <label>3</label>
    </ligand>
</feature>
<feature type="binding site" evidence="1">
    <location>
        <position position="680"/>
    </location>
    <ligand>
        <name>Mg(2+)</name>
        <dbReference type="ChEBI" id="CHEBI:18420"/>
        <label>3</label>
    </ligand>
</feature>
<feature type="mutagenesis site" description="Strongly increased catalytic activity." evidence="4">
    <original>A</original>
    <variation>T</variation>
    <location>
        <position position="676"/>
    </location>
</feature>
<dbReference type="EC" id="4.2.3.-" evidence="3"/>
<dbReference type="EC" id="4.2.3.19" evidence="3"/>
<dbReference type="EMBL" id="EQ973975">
    <property type="protein sequence ID" value="EEF36535.1"/>
    <property type="molecule type" value="Genomic_DNA"/>
</dbReference>
<dbReference type="SMR" id="B9SIM2"/>
<dbReference type="STRING" id="3988.B9SIM2"/>
<dbReference type="eggNOG" id="ENOG502QVGX">
    <property type="taxonomic scope" value="Eukaryota"/>
</dbReference>
<dbReference type="InParanoid" id="B9SIM2"/>
<dbReference type="UniPathway" id="UPA00213"/>
<dbReference type="Proteomes" id="UP000008311">
    <property type="component" value="Unassembled WGS sequence"/>
</dbReference>
<dbReference type="GO" id="GO:0009507">
    <property type="term" value="C:chloroplast"/>
    <property type="evidence" value="ECO:0000318"/>
    <property type="project" value="GO_Central"/>
</dbReference>
<dbReference type="GO" id="GO:0009899">
    <property type="term" value="F:ent-kaurene synthase activity"/>
    <property type="evidence" value="ECO:0007669"/>
    <property type="project" value="UniProtKB-EC"/>
</dbReference>
<dbReference type="GO" id="GO:0000287">
    <property type="term" value="F:magnesium ion binding"/>
    <property type="evidence" value="ECO:0000318"/>
    <property type="project" value="GO_Central"/>
</dbReference>
<dbReference type="GO" id="GO:0010333">
    <property type="term" value="F:terpene synthase activity"/>
    <property type="evidence" value="ECO:0000318"/>
    <property type="project" value="GO_Central"/>
</dbReference>
<dbReference type="GO" id="GO:0009686">
    <property type="term" value="P:gibberellin biosynthetic process"/>
    <property type="evidence" value="ECO:0000318"/>
    <property type="project" value="GO_Central"/>
</dbReference>
<dbReference type="FunFam" id="1.50.10.160:FF:000002">
    <property type="entry name" value="cis-abienol synthase, chloroplastic"/>
    <property type="match status" value="1"/>
</dbReference>
<dbReference type="FunFam" id="1.50.10.130:FF:000002">
    <property type="entry name" value="Ent-copalyl diphosphate synthase, chloroplastic"/>
    <property type="match status" value="1"/>
</dbReference>
<dbReference type="FunFam" id="1.10.600.10:FF:000005">
    <property type="entry name" value="Ent-kaur-16-ene synthase, chloroplastic"/>
    <property type="match status" value="1"/>
</dbReference>
<dbReference type="Gene3D" id="1.50.10.160">
    <property type="match status" value="1"/>
</dbReference>
<dbReference type="Gene3D" id="1.10.600.10">
    <property type="entry name" value="Farnesyl Diphosphate Synthase"/>
    <property type="match status" value="1"/>
</dbReference>
<dbReference type="Gene3D" id="1.50.10.130">
    <property type="entry name" value="Terpene synthase, N-terminal domain"/>
    <property type="match status" value="1"/>
</dbReference>
<dbReference type="InterPro" id="IPR008949">
    <property type="entry name" value="Isoprenoid_synthase_dom_sf"/>
</dbReference>
<dbReference type="InterPro" id="IPR001906">
    <property type="entry name" value="Terpene_synth_N"/>
</dbReference>
<dbReference type="InterPro" id="IPR036965">
    <property type="entry name" value="Terpene_synth_N_sf"/>
</dbReference>
<dbReference type="InterPro" id="IPR050148">
    <property type="entry name" value="Terpene_synthase-like"/>
</dbReference>
<dbReference type="InterPro" id="IPR005630">
    <property type="entry name" value="Terpene_synthase_metal-bd"/>
</dbReference>
<dbReference type="InterPro" id="IPR008930">
    <property type="entry name" value="Terpenoid_cyclase/PrenylTrfase"/>
</dbReference>
<dbReference type="PANTHER" id="PTHR31739">
    <property type="entry name" value="ENT-COPALYL DIPHOSPHATE SYNTHASE, CHLOROPLASTIC"/>
    <property type="match status" value="1"/>
</dbReference>
<dbReference type="PANTHER" id="PTHR31739:SF34">
    <property type="entry name" value="TERPENE SYNTHASE METAL-BINDING DOMAIN-CONTAINING PROTEIN"/>
    <property type="match status" value="1"/>
</dbReference>
<dbReference type="Pfam" id="PF01397">
    <property type="entry name" value="Terpene_synth"/>
    <property type="match status" value="1"/>
</dbReference>
<dbReference type="Pfam" id="PF03936">
    <property type="entry name" value="Terpene_synth_C"/>
    <property type="match status" value="1"/>
</dbReference>
<dbReference type="SFLD" id="SFLDG01014">
    <property type="entry name" value="Terpene_Cyclase_Like_1_N-term"/>
    <property type="match status" value="1"/>
</dbReference>
<dbReference type="SUPFAM" id="SSF48239">
    <property type="entry name" value="Terpenoid cyclases/Protein prenyltransferases"/>
    <property type="match status" value="2"/>
</dbReference>
<dbReference type="SUPFAM" id="SSF48576">
    <property type="entry name" value="Terpenoid synthases"/>
    <property type="match status" value="1"/>
</dbReference>
<comment type="function">
    <text evidence="4">Diterpene cyclase involved in the biosynthesis of labdane-related diterpenoids (LRDs) natural products (PubMed:24810014). Catalyzes the cyclization of ent-CDP into ent-trachylobane as a major and ent-kaurene as a minor product (PubMed:24810014).</text>
</comment>
<comment type="catalytic activity">
    <reaction evidence="4">
        <text>ent-copalyl diphosphate = ent-trachylobane + diphosphate</text>
        <dbReference type="Rhea" id="RHEA:81219"/>
        <dbReference type="ChEBI" id="CHEBI:33019"/>
        <dbReference type="ChEBI" id="CHEBI:58553"/>
        <dbReference type="ChEBI" id="CHEBI:231826"/>
    </reaction>
    <physiologicalReaction direction="left-to-right" evidence="4">
        <dbReference type="Rhea" id="RHEA:81220"/>
    </physiologicalReaction>
</comment>
<comment type="catalytic activity">
    <reaction evidence="4">
        <text>ent-copalyl diphosphate = ent-kaur-16-ene + diphosphate</text>
        <dbReference type="Rhea" id="RHEA:22220"/>
        <dbReference type="ChEBI" id="CHEBI:15415"/>
        <dbReference type="ChEBI" id="CHEBI:33019"/>
        <dbReference type="ChEBI" id="CHEBI:58553"/>
        <dbReference type="EC" id="4.2.3.19"/>
    </reaction>
    <physiologicalReaction direction="left-to-right" evidence="4">
        <dbReference type="Rhea" id="RHEA:22221"/>
    </physiologicalReaction>
</comment>
<comment type="cofactor">
    <cofactor evidence="1">
        <name>Mg(2+)</name>
        <dbReference type="ChEBI" id="CHEBI:18420"/>
    </cofactor>
    <text evidence="1">Binds 3 Mg(2+) ions per subunit.</text>
</comment>
<comment type="pathway">
    <text evidence="4">Secondary metabolite biosynthesis; terpenoid biosynthesis.</text>
</comment>
<comment type="subcellular location">
    <subcellularLocation>
        <location evidence="2">Plastid</location>
        <location evidence="2">Chloroplast</location>
    </subcellularLocation>
</comment>
<comment type="domain">
    <text evidence="1">The Asp-Asp-Xaa-Xaa-Asp/Glu (DDXXD/E) motif is important for the catalytic activity, presumably through binding to Mg(2+).</text>
</comment>
<comment type="similarity">
    <text evidence="6">Belongs to the terpene synthase family.</text>
</comment>